<accession>P03782</accession>
<proteinExistence type="predicted"/>
<name>Y41_BPT7</name>
<organism>
    <name type="scientific">Escherichia phage T7</name>
    <name type="common">Bacteriophage T7</name>
    <dbReference type="NCBI Taxonomy" id="10760"/>
    <lineage>
        <taxon>Viruses</taxon>
        <taxon>Duplodnaviria</taxon>
        <taxon>Heunggongvirae</taxon>
        <taxon>Uroviricota</taxon>
        <taxon>Caudoviricetes</taxon>
        <taxon>Autographiviridae</taxon>
        <taxon>Studiervirinae</taxon>
        <taxon>Teseptimavirus</taxon>
        <taxon>Teseptimavirus T7</taxon>
    </lineage>
</organism>
<protein>
    <recommendedName>
        <fullName>Protein 4.1</fullName>
    </recommendedName>
    <alternativeName>
        <fullName>Gene product 4.1</fullName>
        <shortName>Gp4.1</shortName>
    </alternativeName>
</protein>
<feature type="chain" id="PRO_0000106489" description="Protein 4.1">
    <location>
        <begin position="1"/>
        <end position="40"/>
    </location>
</feature>
<dbReference type="EMBL" id="V01146">
    <property type="protein sequence ID" value="CAA24406.1"/>
    <property type="molecule type" value="Genomic_DNA"/>
</dbReference>
<dbReference type="PIR" id="A04407">
    <property type="entry name" value="W4BP17"/>
</dbReference>
<dbReference type="RefSeq" id="NP_041976.1">
    <property type="nucleotide sequence ID" value="NC_001604.1"/>
</dbReference>
<dbReference type="SMR" id="P03782"/>
<dbReference type="KEGG" id="vg:1261047"/>
<dbReference type="Proteomes" id="UP000000840">
    <property type="component" value="Genome"/>
</dbReference>
<keyword id="KW-1185">Reference proteome</keyword>
<organismHost>
    <name type="scientific">Escherichia coli</name>
    <dbReference type="NCBI Taxonomy" id="562"/>
</organismHost>
<sequence>MGTRCSLTDTRSATYARSGLLVMKTLKRGLQNGNPQEVNQ</sequence>
<reference key="1">
    <citation type="journal article" date="1983" name="J. Mol. Biol.">
        <title>Complete nucleotide sequence of bacteriophage T7 DNA and the locations of T7 genetic elements.</title>
        <authorList>
            <person name="Dunn J.J."/>
            <person name="Studier F.W."/>
        </authorList>
    </citation>
    <scope>NUCLEOTIDE SEQUENCE [LARGE SCALE GENOMIC DNA]</scope>
</reference>
<gene>
    <name type="ordered locus">4.1</name>
</gene>